<name>MIAB_SHIB3</name>
<gene>
    <name evidence="1" type="primary">miaB</name>
    <name type="ordered locus">SbBS512_E0586</name>
</gene>
<comment type="function">
    <text evidence="1">Catalyzes the methylthiolation of N6-(dimethylallyl)adenosine (i(6)A), leading to the formation of 2-methylthio-N6-(dimethylallyl)adenosine (ms(2)i(6)A) at position 37 in tRNAs that read codons beginning with uridine.</text>
</comment>
<comment type="catalytic activity">
    <reaction evidence="1">
        <text>N(6)-dimethylallyladenosine(37) in tRNA + (sulfur carrier)-SH + AH2 + 2 S-adenosyl-L-methionine = 2-methylsulfanyl-N(6)-dimethylallyladenosine(37) in tRNA + (sulfur carrier)-H + 5'-deoxyadenosine + L-methionine + A + S-adenosyl-L-homocysteine + 2 H(+)</text>
        <dbReference type="Rhea" id="RHEA:37067"/>
        <dbReference type="Rhea" id="RHEA-COMP:10375"/>
        <dbReference type="Rhea" id="RHEA-COMP:10376"/>
        <dbReference type="Rhea" id="RHEA-COMP:14737"/>
        <dbReference type="Rhea" id="RHEA-COMP:14739"/>
        <dbReference type="ChEBI" id="CHEBI:13193"/>
        <dbReference type="ChEBI" id="CHEBI:15378"/>
        <dbReference type="ChEBI" id="CHEBI:17319"/>
        <dbReference type="ChEBI" id="CHEBI:17499"/>
        <dbReference type="ChEBI" id="CHEBI:29917"/>
        <dbReference type="ChEBI" id="CHEBI:57844"/>
        <dbReference type="ChEBI" id="CHEBI:57856"/>
        <dbReference type="ChEBI" id="CHEBI:59789"/>
        <dbReference type="ChEBI" id="CHEBI:64428"/>
        <dbReference type="ChEBI" id="CHEBI:74415"/>
        <dbReference type="ChEBI" id="CHEBI:74417"/>
        <dbReference type="EC" id="2.8.4.3"/>
    </reaction>
</comment>
<comment type="cofactor">
    <cofactor evidence="1">
        <name>[4Fe-4S] cluster</name>
        <dbReference type="ChEBI" id="CHEBI:49883"/>
    </cofactor>
    <text evidence="1">Binds 2 [4Fe-4S] clusters. One cluster is coordinated with 3 cysteines and an exchangeable S-adenosyl-L-methionine.</text>
</comment>
<comment type="subunit">
    <text evidence="1">Monomer.</text>
</comment>
<comment type="subcellular location">
    <subcellularLocation>
        <location evidence="1">Cytoplasm</location>
    </subcellularLocation>
</comment>
<comment type="similarity">
    <text evidence="1">Belongs to the methylthiotransferase family. MiaB subfamily.</text>
</comment>
<protein>
    <recommendedName>
        <fullName evidence="1">tRNA-2-methylthio-N(6)-dimethylallyladenosine synthase</fullName>
        <ecNumber evidence="1">2.8.4.3</ecNumber>
    </recommendedName>
    <alternativeName>
        <fullName evidence="1">(Dimethylallyl)adenosine tRNA methylthiotransferase MiaB</fullName>
    </alternativeName>
    <alternativeName>
        <fullName evidence="1">tRNA-i(6)A37 methylthiotransferase</fullName>
    </alternativeName>
</protein>
<sequence>MTKKLHIKTWGCQMNEYDSSKMADLLDATHSYQLTDVAEEADVLLLNTCSIREKAQEKVFHQLGRWKLLKEKNPDLIIGVGGCVASQEGEHIRQRAHYVDIIFGPQTLHRLPEMINSVRGDRSPVVDISFPEIEKFDRLPEPRAEGPTAFVSIMEGCNKYCTYCVVPYTRGEEVSRPSDDILFEIAQLAAQGVREVNLLGQNVNAWRGENYDGSTGSFADLLRLVAAIDGIDRIRFTTSHPIEFTDDIIEVYRDTPELVSFLHLPVQSGSDRILNLMGRTHTALEYKAIIRKLRAARPDIQISSDFIVGFPGETTEDFEKTMKLIADVNFDMSYSFIFSARPGTPAADMVDDVPEEEKKQRLYILQERINQQAMAWSRRMLGTTQRILVEGTSRKSIMELSGRTENNRVVNFEGTPDMIGKFVDVEITDVYPNSLRGKVVRTEDEMGLRVAETPESVIARTRKENDLGVGYYQP</sequence>
<feature type="chain" id="PRO_0000374550" description="tRNA-2-methylthio-N(6)-dimethylallyladenosine synthase">
    <location>
        <begin position="1"/>
        <end position="474"/>
    </location>
</feature>
<feature type="domain" description="MTTase N-terminal" evidence="1">
    <location>
        <begin position="3"/>
        <end position="120"/>
    </location>
</feature>
<feature type="domain" description="Radical SAM core" evidence="2">
    <location>
        <begin position="143"/>
        <end position="375"/>
    </location>
</feature>
<feature type="domain" description="TRAM" evidence="1">
    <location>
        <begin position="378"/>
        <end position="441"/>
    </location>
</feature>
<feature type="binding site" evidence="1">
    <location>
        <position position="12"/>
    </location>
    <ligand>
        <name>[4Fe-4S] cluster</name>
        <dbReference type="ChEBI" id="CHEBI:49883"/>
        <label>1</label>
    </ligand>
</feature>
<feature type="binding site" evidence="1">
    <location>
        <position position="49"/>
    </location>
    <ligand>
        <name>[4Fe-4S] cluster</name>
        <dbReference type="ChEBI" id="CHEBI:49883"/>
        <label>1</label>
    </ligand>
</feature>
<feature type="binding site" evidence="1">
    <location>
        <position position="83"/>
    </location>
    <ligand>
        <name>[4Fe-4S] cluster</name>
        <dbReference type="ChEBI" id="CHEBI:49883"/>
        <label>1</label>
    </ligand>
</feature>
<feature type="binding site" evidence="1">
    <location>
        <position position="157"/>
    </location>
    <ligand>
        <name>[4Fe-4S] cluster</name>
        <dbReference type="ChEBI" id="CHEBI:49883"/>
        <label>2</label>
        <note>4Fe-4S-S-AdoMet</note>
    </ligand>
</feature>
<feature type="binding site" evidence="1">
    <location>
        <position position="161"/>
    </location>
    <ligand>
        <name>[4Fe-4S] cluster</name>
        <dbReference type="ChEBI" id="CHEBI:49883"/>
        <label>2</label>
        <note>4Fe-4S-S-AdoMet</note>
    </ligand>
</feature>
<feature type="binding site" evidence="1">
    <location>
        <position position="164"/>
    </location>
    <ligand>
        <name>[4Fe-4S] cluster</name>
        <dbReference type="ChEBI" id="CHEBI:49883"/>
        <label>2</label>
        <note>4Fe-4S-S-AdoMet</note>
    </ligand>
</feature>
<organism>
    <name type="scientific">Shigella boydii serotype 18 (strain CDC 3083-94 / BS512)</name>
    <dbReference type="NCBI Taxonomy" id="344609"/>
    <lineage>
        <taxon>Bacteria</taxon>
        <taxon>Pseudomonadati</taxon>
        <taxon>Pseudomonadota</taxon>
        <taxon>Gammaproteobacteria</taxon>
        <taxon>Enterobacterales</taxon>
        <taxon>Enterobacteriaceae</taxon>
        <taxon>Shigella</taxon>
    </lineage>
</organism>
<dbReference type="EC" id="2.8.4.3" evidence="1"/>
<dbReference type="EMBL" id="CP001063">
    <property type="protein sequence ID" value="ACD09374.1"/>
    <property type="molecule type" value="Genomic_DNA"/>
</dbReference>
<dbReference type="RefSeq" id="WP_000162756.1">
    <property type="nucleotide sequence ID" value="NC_010658.1"/>
</dbReference>
<dbReference type="SMR" id="B2TU59"/>
<dbReference type="STRING" id="344609.SbBS512_E0586"/>
<dbReference type="KEGG" id="sbc:SbBS512_E0586"/>
<dbReference type="HOGENOM" id="CLU_018697_2_0_6"/>
<dbReference type="Proteomes" id="UP000001030">
    <property type="component" value="Chromosome"/>
</dbReference>
<dbReference type="GO" id="GO:0005829">
    <property type="term" value="C:cytosol"/>
    <property type="evidence" value="ECO:0007669"/>
    <property type="project" value="TreeGrafter"/>
</dbReference>
<dbReference type="GO" id="GO:0051539">
    <property type="term" value="F:4 iron, 4 sulfur cluster binding"/>
    <property type="evidence" value="ECO:0007669"/>
    <property type="project" value="UniProtKB-UniRule"/>
</dbReference>
<dbReference type="GO" id="GO:0046872">
    <property type="term" value="F:metal ion binding"/>
    <property type="evidence" value="ECO:0007669"/>
    <property type="project" value="UniProtKB-KW"/>
</dbReference>
<dbReference type="GO" id="GO:0035597">
    <property type="term" value="F:N6-isopentenyladenosine methylthiotransferase activity"/>
    <property type="evidence" value="ECO:0007669"/>
    <property type="project" value="TreeGrafter"/>
</dbReference>
<dbReference type="CDD" id="cd01335">
    <property type="entry name" value="Radical_SAM"/>
    <property type="match status" value="1"/>
</dbReference>
<dbReference type="FunFam" id="3.40.50.12160:FF:000001">
    <property type="entry name" value="tRNA-2-methylthio-N(6)-dimethylallyladenosine synthase"/>
    <property type="match status" value="1"/>
</dbReference>
<dbReference type="FunFam" id="3.80.30.20:FF:000001">
    <property type="entry name" value="tRNA-2-methylthio-N(6)-dimethylallyladenosine synthase 2"/>
    <property type="match status" value="1"/>
</dbReference>
<dbReference type="Gene3D" id="3.40.50.12160">
    <property type="entry name" value="Methylthiotransferase, N-terminal domain"/>
    <property type="match status" value="1"/>
</dbReference>
<dbReference type="Gene3D" id="3.80.30.20">
    <property type="entry name" value="tm_1862 like domain"/>
    <property type="match status" value="1"/>
</dbReference>
<dbReference type="HAMAP" id="MF_01864">
    <property type="entry name" value="tRNA_metthiotr_MiaB"/>
    <property type="match status" value="1"/>
</dbReference>
<dbReference type="InterPro" id="IPR006638">
    <property type="entry name" value="Elp3/MiaA/NifB-like_rSAM"/>
</dbReference>
<dbReference type="InterPro" id="IPR005839">
    <property type="entry name" value="Methylthiotransferase"/>
</dbReference>
<dbReference type="InterPro" id="IPR020612">
    <property type="entry name" value="Methylthiotransferase_CS"/>
</dbReference>
<dbReference type="InterPro" id="IPR013848">
    <property type="entry name" value="Methylthiotransferase_N"/>
</dbReference>
<dbReference type="InterPro" id="IPR038135">
    <property type="entry name" value="Methylthiotransferase_N_sf"/>
</dbReference>
<dbReference type="InterPro" id="IPR006463">
    <property type="entry name" value="MiaB_methiolase"/>
</dbReference>
<dbReference type="InterPro" id="IPR007197">
    <property type="entry name" value="rSAM"/>
</dbReference>
<dbReference type="InterPro" id="IPR023404">
    <property type="entry name" value="rSAM_horseshoe"/>
</dbReference>
<dbReference type="InterPro" id="IPR002792">
    <property type="entry name" value="TRAM_dom"/>
</dbReference>
<dbReference type="NCBIfam" id="TIGR01574">
    <property type="entry name" value="miaB-methiolase"/>
    <property type="match status" value="1"/>
</dbReference>
<dbReference type="NCBIfam" id="TIGR00089">
    <property type="entry name" value="MiaB/RimO family radical SAM methylthiotransferase"/>
    <property type="match status" value="1"/>
</dbReference>
<dbReference type="PANTHER" id="PTHR43020">
    <property type="entry name" value="CDK5 REGULATORY SUBUNIT-ASSOCIATED PROTEIN 1"/>
    <property type="match status" value="1"/>
</dbReference>
<dbReference type="PANTHER" id="PTHR43020:SF2">
    <property type="entry name" value="MITOCHONDRIAL TRNA METHYLTHIOTRANSFERASE CDK5RAP1"/>
    <property type="match status" value="1"/>
</dbReference>
<dbReference type="Pfam" id="PF04055">
    <property type="entry name" value="Radical_SAM"/>
    <property type="match status" value="1"/>
</dbReference>
<dbReference type="Pfam" id="PF01938">
    <property type="entry name" value="TRAM"/>
    <property type="match status" value="1"/>
</dbReference>
<dbReference type="Pfam" id="PF00919">
    <property type="entry name" value="UPF0004"/>
    <property type="match status" value="1"/>
</dbReference>
<dbReference type="SFLD" id="SFLDF00273">
    <property type="entry name" value="(dimethylallyl)adenosine_tRNA"/>
    <property type="match status" value="1"/>
</dbReference>
<dbReference type="SFLD" id="SFLDG01082">
    <property type="entry name" value="B12-binding_domain_containing"/>
    <property type="match status" value="1"/>
</dbReference>
<dbReference type="SFLD" id="SFLDS00029">
    <property type="entry name" value="Radical_SAM"/>
    <property type="match status" value="1"/>
</dbReference>
<dbReference type="SMART" id="SM00729">
    <property type="entry name" value="Elp3"/>
    <property type="match status" value="1"/>
</dbReference>
<dbReference type="SUPFAM" id="SSF102114">
    <property type="entry name" value="Radical SAM enzymes"/>
    <property type="match status" value="1"/>
</dbReference>
<dbReference type="PROSITE" id="PS51449">
    <property type="entry name" value="MTTASE_N"/>
    <property type="match status" value="1"/>
</dbReference>
<dbReference type="PROSITE" id="PS01278">
    <property type="entry name" value="MTTASE_RADICAL"/>
    <property type="match status" value="1"/>
</dbReference>
<dbReference type="PROSITE" id="PS51918">
    <property type="entry name" value="RADICAL_SAM"/>
    <property type="match status" value="1"/>
</dbReference>
<dbReference type="PROSITE" id="PS50926">
    <property type="entry name" value="TRAM"/>
    <property type="match status" value="1"/>
</dbReference>
<keyword id="KW-0004">4Fe-4S</keyword>
<keyword id="KW-0963">Cytoplasm</keyword>
<keyword id="KW-0408">Iron</keyword>
<keyword id="KW-0411">Iron-sulfur</keyword>
<keyword id="KW-0479">Metal-binding</keyword>
<keyword id="KW-1185">Reference proteome</keyword>
<keyword id="KW-0949">S-adenosyl-L-methionine</keyword>
<keyword id="KW-0808">Transferase</keyword>
<keyword id="KW-0819">tRNA processing</keyword>
<reference key="1">
    <citation type="submission" date="2008-05" db="EMBL/GenBank/DDBJ databases">
        <title>Complete sequence of Shigella boydii serotype 18 strain BS512.</title>
        <authorList>
            <person name="Rasko D.A."/>
            <person name="Rosovitz M."/>
            <person name="Maurelli A.T."/>
            <person name="Myers G."/>
            <person name="Seshadri R."/>
            <person name="Cer R."/>
            <person name="Jiang L."/>
            <person name="Ravel J."/>
            <person name="Sebastian Y."/>
        </authorList>
    </citation>
    <scope>NUCLEOTIDE SEQUENCE [LARGE SCALE GENOMIC DNA]</scope>
    <source>
        <strain>CDC 3083-94 / BS512</strain>
    </source>
</reference>
<proteinExistence type="inferred from homology"/>
<evidence type="ECO:0000255" key="1">
    <source>
        <dbReference type="HAMAP-Rule" id="MF_01864"/>
    </source>
</evidence>
<evidence type="ECO:0000255" key="2">
    <source>
        <dbReference type="PROSITE-ProRule" id="PRU01266"/>
    </source>
</evidence>
<accession>B2TU59</accession>